<comment type="function">
    <text evidence="1">Transcriptional repressor that controls expression of the genes required for the catabolism of sialic acids.</text>
</comment>
<comment type="similarity">
    <text evidence="1">Belongs to the NanR family.</text>
</comment>
<feature type="chain" id="PRO_1000085735" description="HTH-type transcriptional repressor NanR">
    <location>
        <begin position="1"/>
        <end position="263"/>
    </location>
</feature>
<feature type="domain" description="HTH gntR-type" evidence="1">
    <location>
        <begin position="30"/>
        <end position="98"/>
    </location>
</feature>
<feature type="DNA-binding region" description="H-T-H motif" evidence="1">
    <location>
        <begin position="58"/>
        <end position="77"/>
    </location>
</feature>
<gene>
    <name evidence="1" type="primary">nanR</name>
    <name type="ordered locus">SARI_04284</name>
</gene>
<sequence>MDVMNAFDSQAEDSPLTIGHSLRRRPLARKKLSEMVEEELEQMIRRHEFGEGEQLPSERELMAFFNVGRPSVREALAALKRKGLVQINNGERARVSRPSADTIISELSGMAKDFLTHPGGIAHFEQLRLFFESSLVRYAAEHATDEQIALLTKALEINSQSLDDNALFIRSDVEFHRVLAEIPGNPIFMAIHVALLDWLIAARPSVPDRELHEHNNVSYQQHIVIVDAIRQRDPDKADRALQTHLNSVSATWHAFGKKSQKTR</sequence>
<accession>A9MNY5</accession>
<reference key="1">
    <citation type="submission" date="2007-11" db="EMBL/GenBank/DDBJ databases">
        <authorList>
            <consortium name="The Salmonella enterica serovar Arizonae Genome Sequencing Project"/>
            <person name="McClelland M."/>
            <person name="Sanderson E.K."/>
            <person name="Porwollik S."/>
            <person name="Spieth J."/>
            <person name="Clifton W.S."/>
            <person name="Fulton R."/>
            <person name="Chunyan W."/>
            <person name="Wollam A."/>
            <person name="Shah N."/>
            <person name="Pepin K."/>
            <person name="Bhonagiri V."/>
            <person name="Nash W."/>
            <person name="Johnson M."/>
            <person name="Thiruvilangam P."/>
            <person name="Wilson R."/>
        </authorList>
    </citation>
    <scope>NUCLEOTIDE SEQUENCE [LARGE SCALE GENOMIC DNA]</scope>
    <source>
        <strain>ATCC BAA-731 / CDC346-86 / RSK2980</strain>
    </source>
</reference>
<protein>
    <recommendedName>
        <fullName evidence="1">HTH-type transcriptional repressor NanR</fullName>
    </recommendedName>
</protein>
<organism>
    <name type="scientific">Salmonella arizonae (strain ATCC BAA-731 / CDC346-86 / RSK2980)</name>
    <dbReference type="NCBI Taxonomy" id="41514"/>
    <lineage>
        <taxon>Bacteria</taxon>
        <taxon>Pseudomonadati</taxon>
        <taxon>Pseudomonadota</taxon>
        <taxon>Gammaproteobacteria</taxon>
        <taxon>Enterobacterales</taxon>
        <taxon>Enterobacteriaceae</taxon>
        <taxon>Salmonella</taxon>
    </lineage>
</organism>
<keyword id="KW-0238">DNA-binding</keyword>
<keyword id="KW-1185">Reference proteome</keyword>
<keyword id="KW-0678">Repressor</keyword>
<keyword id="KW-0804">Transcription</keyword>
<keyword id="KW-0805">Transcription regulation</keyword>
<proteinExistence type="inferred from homology"/>
<dbReference type="EMBL" id="CP000880">
    <property type="protein sequence ID" value="ABX24067.1"/>
    <property type="molecule type" value="Genomic_DNA"/>
</dbReference>
<dbReference type="SMR" id="A9MNY5"/>
<dbReference type="STRING" id="41514.SARI_04284"/>
<dbReference type="KEGG" id="ses:SARI_04284"/>
<dbReference type="HOGENOM" id="CLU_017584_9_1_6"/>
<dbReference type="Proteomes" id="UP000002084">
    <property type="component" value="Chromosome"/>
</dbReference>
<dbReference type="GO" id="GO:0003677">
    <property type="term" value="F:DNA binding"/>
    <property type="evidence" value="ECO:0007669"/>
    <property type="project" value="UniProtKB-KW"/>
</dbReference>
<dbReference type="GO" id="GO:0003700">
    <property type="term" value="F:DNA-binding transcription factor activity"/>
    <property type="evidence" value="ECO:0007669"/>
    <property type="project" value="UniProtKB-UniRule"/>
</dbReference>
<dbReference type="GO" id="GO:0045892">
    <property type="term" value="P:negative regulation of DNA-templated transcription"/>
    <property type="evidence" value="ECO:0007669"/>
    <property type="project" value="UniProtKB-UniRule"/>
</dbReference>
<dbReference type="CDD" id="cd07377">
    <property type="entry name" value="WHTH_GntR"/>
    <property type="match status" value="1"/>
</dbReference>
<dbReference type="FunFam" id="1.10.10.10:FF:000150">
    <property type="entry name" value="HTH-type transcriptional repressor NanR"/>
    <property type="match status" value="1"/>
</dbReference>
<dbReference type="Gene3D" id="1.20.120.530">
    <property type="entry name" value="GntR ligand-binding domain-like"/>
    <property type="match status" value="1"/>
</dbReference>
<dbReference type="Gene3D" id="1.10.10.10">
    <property type="entry name" value="Winged helix-like DNA-binding domain superfamily/Winged helix DNA-binding domain"/>
    <property type="match status" value="1"/>
</dbReference>
<dbReference type="HAMAP" id="MF_01236">
    <property type="entry name" value="HTH_NanR"/>
    <property type="match status" value="1"/>
</dbReference>
<dbReference type="InterPro" id="IPR011711">
    <property type="entry name" value="GntR_C"/>
</dbReference>
<dbReference type="InterPro" id="IPR008920">
    <property type="entry name" value="TF_FadR/GntR_C"/>
</dbReference>
<dbReference type="InterPro" id="IPR000524">
    <property type="entry name" value="Tscrpt_reg_HTH_GntR"/>
</dbReference>
<dbReference type="InterPro" id="IPR023730">
    <property type="entry name" value="Tscrpt_reg_NanR"/>
</dbReference>
<dbReference type="InterPro" id="IPR036388">
    <property type="entry name" value="WH-like_DNA-bd_sf"/>
</dbReference>
<dbReference type="InterPro" id="IPR036390">
    <property type="entry name" value="WH_DNA-bd_sf"/>
</dbReference>
<dbReference type="NCBIfam" id="NF003011">
    <property type="entry name" value="PRK03837.1"/>
    <property type="match status" value="1"/>
</dbReference>
<dbReference type="PANTHER" id="PTHR43537:SF53">
    <property type="entry name" value="HTH-TYPE TRANSCRIPTIONAL REPRESSOR NANR"/>
    <property type="match status" value="1"/>
</dbReference>
<dbReference type="PANTHER" id="PTHR43537">
    <property type="entry name" value="TRANSCRIPTIONAL REGULATOR, GNTR FAMILY"/>
    <property type="match status" value="1"/>
</dbReference>
<dbReference type="Pfam" id="PF07729">
    <property type="entry name" value="FCD"/>
    <property type="match status" value="1"/>
</dbReference>
<dbReference type="Pfam" id="PF00392">
    <property type="entry name" value="GntR"/>
    <property type="match status" value="1"/>
</dbReference>
<dbReference type="PRINTS" id="PR00035">
    <property type="entry name" value="HTHGNTR"/>
</dbReference>
<dbReference type="SMART" id="SM00895">
    <property type="entry name" value="FCD"/>
    <property type="match status" value="1"/>
</dbReference>
<dbReference type="SMART" id="SM00345">
    <property type="entry name" value="HTH_GNTR"/>
    <property type="match status" value="1"/>
</dbReference>
<dbReference type="SUPFAM" id="SSF48008">
    <property type="entry name" value="GntR ligand-binding domain-like"/>
    <property type="match status" value="1"/>
</dbReference>
<dbReference type="SUPFAM" id="SSF46785">
    <property type="entry name" value="Winged helix' DNA-binding domain"/>
    <property type="match status" value="1"/>
</dbReference>
<dbReference type="PROSITE" id="PS50949">
    <property type="entry name" value="HTH_GNTR"/>
    <property type="match status" value="1"/>
</dbReference>
<evidence type="ECO:0000255" key="1">
    <source>
        <dbReference type="HAMAP-Rule" id="MF_01236"/>
    </source>
</evidence>
<name>NANR_SALAR</name>